<protein>
    <recommendedName>
        <fullName evidence="1">Small ribosomal subunit protein uS9</fullName>
    </recommendedName>
    <alternativeName>
        <fullName evidence="2">30S ribosomal protein S9</fullName>
    </alternativeName>
</protein>
<evidence type="ECO:0000255" key="1">
    <source>
        <dbReference type="HAMAP-Rule" id="MF_00532"/>
    </source>
</evidence>
<evidence type="ECO:0000305" key="2"/>
<dbReference type="EMBL" id="AE004969">
    <property type="protein sequence ID" value="AAW90633.1"/>
    <property type="molecule type" value="Genomic_DNA"/>
</dbReference>
<dbReference type="RefSeq" id="WP_003686946.1">
    <property type="nucleotide sequence ID" value="NC_002946.2"/>
</dbReference>
<dbReference type="RefSeq" id="YP_209045.1">
    <property type="nucleotide sequence ID" value="NC_002946.2"/>
</dbReference>
<dbReference type="SMR" id="Q5F5A4"/>
<dbReference type="STRING" id="242231.NGO_2025"/>
<dbReference type="GeneID" id="66754086"/>
<dbReference type="KEGG" id="ngo:NGO_2025"/>
<dbReference type="PATRIC" id="fig|242231.10.peg.2440"/>
<dbReference type="HOGENOM" id="CLU_046483_2_1_4"/>
<dbReference type="Proteomes" id="UP000000535">
    <property type="component" value="Chromosome"/>
</dbReference>
<dbReference type="GO" id="GO:0022627">
    <property type="term" value="C:cytosolic small ribosomal subunit"/>
    <property type="evidence" value="ECO:0007669"/>
    <property type="project" value="TreeGrafter"/>
</dbReference>
<dbReference type="GO" id="GO:0003723">
    <property type="term" value="F:RNA binding"/>
    <property type="evidence" value="ECO:0007669"/>
    <property type="project" value="TreeGrafter"/>
</dbReference>
<dbReference type="GO" id="GO:0003735">
    <property type="term" value="F:structural constituent of ribosome"/>
    <property type="evidence" value="ECO:0007669"/>
    <property type="project" value="InterPro"/>
</dbReference>
<dbReference type="GO" id="GO:0006412">
    <property type="term" value="P:translation"/>
    <property type="evidence" value="ECO:0007669"/>
    <property type="project" value="UniProtKB-UniRule"/>
</dbReference>
<dbReference type="FunFam" id="3.30.230.10:FF:000001">
    <property type="entry name" value="30S ribosomal protein S9"/>
    <property type="match status" value="1"/>
</dbReference>
<dbReference type="Gene3D" id="3.30.230.10">
    <property type="match status" value="1"/>
</dbReference>
<dbReference type="HAMAP" id="MF_00532_B">
    <property type="entry name" value="Ribosomal_uS9_B"/>
    <property type="match status" value="1"/>
</dbReference>
<dbReference type="InterPro" id="IPR020568">
    <property type="entry name" value="Ribosomal_Su5_D2-typ_SF"/>
</dbReference>
<dbReference type="InterPro" id="IPR000754">
    <property type="entry name" value="Ribosomal_uS9"/>
</dbReference>
<dbReference type="InterPro" id="IPR023035">
    <property type="entry name" value="Ribosomal_uS9_bac/plastid"/>
</dbReference>
<dbReference type="InterPro" id="IPR020574">
    <property type="entry name" value="Ribosomal_uS9_CS"/>
</dbReference>
<dbReference type="InterPro" id="IPR014721">
    <property type="entry name" value="Ribsml_uS5_D2-typ_fold_subgr"/>
</dbReference>
<dbReference type="NCBIfam" id="NF001099">
    <property type="entry name" value="PRK00132.1"/>
    <property type="match status" value="1"/>
</dbReference>
<dbReference type="PANTHER" id="PTHR21569">
    <property type="entry name" value="RIBOSOMAL PROTEIN S9"/>
    <property type="match status" value="1"/>
</dbReference>
<dbReference type="PANTHER" id="PTHR21569:SF1">
    <property type="entry name" value="SMALL RIBOSOMAL SUBUNIT PROTEIN US9M"/>
    <property type="match status" value="1"/>
</dbReference>
<dbReference type="Pfam" id="PF00380">
    <property type="entry name" value="Ribosomal_S9"/>
    <property type="match status" value="1"/>
</dbReference>
<dbReference type="SUPFAM" id="SSF54211">
    <property type="entry name" value="Ribosomal protein S5 domain 2-like"/>
    <property type="match status" value="1"/>
</dbReference>
<dbReference type="PROSITE" id="PS00360">
    <property type="entry name" value="RIBOSOMAL_S9"/>
    <property type="match status" value="1"/>
</dbReference>
<reference key="1">
    <citation type="submission" date="2003-03" db="EMBL/GenBank/DDBJ databases">
        <title>The complete genome sequence of Neisseria gonorrhoeae.</title>
        <authorList>
            <person name="Lewis L.A."/>
            <person name="Gillaspy A.F."/>
            <person name="McLaughlin R.E."/>
            <person name="Gipson M."/>
            <person name="Ducey T.F."/>
            <person name="Ownbey T."/>
            <person name="Hartman K."/>
            <person name="Nydick C."/>
            <person name="Carson M.B."/>
            <person name="Vaughn J."/>
            <person name="Thomson C."/>
            <person name="Song L."/>
            <person name="Lin S."/>
            <person name="Yuan X."/>
            <person name="Najar F."/>
            <person name="Zhan M."/>
            <person name="Ren Q."/>
            <person name="Zhu H."/>
            <person name="Qi S."/>
            <person name="Kenton S.M."/>
            <person name="Lai H."/>
            <person name="White J.D."/>
            <person name="Clifton S."/>
            <person name="Roe B.A."/>
            <person name="Dyer D.W."/>
        </authorList>
    </citation>
    <scope>NUCLEOTIDE SEQUENCE [LARGE SCALE GENOMIC DNA]</scope>
    <source>
        <strain>ATCC 700825 / FA 1090</strain>
    </source>
</reference>
<name>RS9_NEIG1</name>
<keyword id="KW-1185">Reference proteome</keyword>
<keyword id="KW-0687">Ribonucleoprotein</keyword>
<keyword id="KW-0689">Ribosomal protein</keyword>
<accession>Q5F5A4</accession>
<proteinExistence type="inferred from homology"/>
<feature type="chain" id="PRO_1000051265" description="Small ribosomal subunit protein uS9">
    <location>
        <begin position="1"/>
        <end position="130"/>
    </location>
</feature>
<sequence length="130" mass="14380">MNGKYYYGTGRRKSSVARVFLTKGTGQIIVNGRPVDEFFARETSRMVVRQPLVLTENAESLDIKVNVVGGGETGQSGAIRHGITRALIDFDAALKPALSQAGFVTRDAREVERKKPGLRKARRAKQFSKR</sequence>
<comment type="similarity">
    <text evidence="1">Belongs to the universal ribosomal protein uS9 family.</text>
</comment>
<organism>
    <name type="scientific">Neisseria gonorrhoeae (strain ATCC 700825 / FA 1090)</name>
    <dbReference type="NCBI Taxonomy" id="242231"/>
    <lineage>
        <taxon>Bacteria</taxon>
        <taxon>Pseudomonadati</taxon>
        <taxon>Pseudomonadota</taxon>
        <taxon>Betaproteobacteria</taxon>
        <taxon>Neisseriales</taxon>
        <taxon>Neisseriaceae</taxon>
        <taxon>Neisseria</taxon>
    </lineage>
</organism>
<gene>
    <name evidence="1" type="primary">rpsI</name>
    <name type="ordered locus">NGO_2025</name>
</gene>